<reference key="1">
    <citation type="submission" date="2006-03" db="EMBL/GenBank/DDBJ databases">
        <title>Complete sequence of Rhodopseudomonas palustris BisB18.</title>
        <authorList>
            <consortium name="US DOE Joint Genome Institute"/>
            <person name="Copeland A."/>
            <person name="Lucas S."/>
            <person name="Lapidus A."/>
            <person name="Barry K."/>
            <person name="Detter J.C."/>
            <person name="Glavina del Rio T."/>
            <person name="Hammon N."/>
            <person name="Israni S."/>
            <person name="Dalin E."/>
            <person name="Tice H."/>
            <person name="Pitluck S."/>
            <person name="Chain P."/>
            <person name="Malfatti S."/>
            <person name="Shin M."/>
            <person name="Vergez L."/>
            <person name="Schmutz J."/>
            <person name="Larimer F."/>
            <person name="Land M."/>
            <person name="Hauser L."/>
            <person name="Pelletier D.A."/>
            <person name="Kyrpides N."/>
            <person name="Anderson I."/>
            <person name="Oda Y."/>
            <person name="Harwood C.S."/>
            <person name="Richardson P."/>
        </authorList>
    </citation>
    <scope>NUCLEOTIDE SEQUENCE [LARGE SCALE GENOMIC DNA]</scope>
    <source>
        <strain>BisB18</strain>
    </source>
</reference>
<organism>
    <name type="scientific">Rhodopseudomonas palustris (strain BisB18)</name>
    <dbReference type="NCBI Taxonomy" id="316056"/>
    <lineage>
        <taxon>Bacteria</taxon>
        <taxon>Pseudomonadati</taxon>
        <taxon>Pseudomonadota</taxon>
        <taxon>Alphaproteobacteria</taxon>
        <taxon>Hyphomicrobiales</taxon>
        <taxon>Nitrobacteraceae</taxon>
        <taxon>Rhodopseudomonas</taxon>
    </lineage>
</organism>
<feature type="chain" id="PRO_1000015738" description="Elongation factor Tu">
    <location>
        <begin position="1"/>
        <end position="396"/>
    </location>
</feature>
<feature type="domain" description="tr-type G">
    <location>
        <begin position="10"/>
        <end position="206"/>
    </location>
</feature>
<feature type="region of interest" description="G1" evidence="1">
    <location>
        <begin position="19"/>
        <end position="26"/>
    </location>
</feature>
<feature type="region of interest" description="G2" evidence="1">
    <location>
        <begin position="60"/>
        <end position="64"/>
    </location>
</feature>
<feature type="region of interest" description="G3" evidence="1">
    <location>
        <begin position="81"/>
        <end position="84"/>
    </location>
</feature>
<feature type="region of interest" description="G4" evidence="1">
    <location>
        <begin position="136"/>
        <end position="139"/>
    </location>
</feature>
<feature type="region of interest" description="G5" evidence="1">
    <location>
        <begin position="174"/>
        <end position="176"/>
    </location>
</feature>
<feature type="binding site" evidence="2">
    <location>
        <begin position="19"/>
        <end position="26"/>
    </location>
    <ligand>
        <name>GTP</name>
        <dbReference type="ChEBI" id="CHEBI:37565"/>
    </ligand>
</feature>
<feature type="binding site" evidence="2">
    <location>
        <position position="26"/>
    </location>
    <ligand>
        <name>Mg(2+)</name>
        <dbReference type="ChEBI" id="CHEBI:18420"/>
    </ligand>
</feature>
<feature type="binding site" evidence="2">
    <location>
        <begin position="81"/>
        <end position="85"/>
    </location>
    <ligand>
        <name>GTP</name>
        <dbReference type="ChEBI" id="CHEBI:37565"/>
    </ligand>
</feature>
<feature type="binding site" evidence="2">
    <location>
        <begin position="136"/>
        <end position="139"/>
    </location>
    <ligand>
        <name>GTP</name>
        <dbReference type="ChEBI" id="CHEBI:37565"/>
    </ligand>
</feature>
<comment type="function">
    <text evidence="2">GTP hydrolase that promotes the GTP-dependent binding of aminoacyl-tRNA to the A-site of ribosomes during protein biosynthesis.</text>
</comment>
<comment type="catalytic activity">
    <reaction evidence="2">
        <text>GTP + H2O = GDP + phosphate + H(+)</text>
        <dbReference type="Rhea" id="RHEA:19669"/>
        <dbReference type="ChEBI" id="CHEBI:15377"/>
        <dbReference type="ChEBI" id="CHEBI:15378"/>
        <dbReference type="ChEBI" id="CHEBI:37565"/>
        <dbReference type="ChEBI" id="CHEBI:43474"/>
        <dbReference type="ChEBI" id="CHEBI:58189"/>
        <dbReference type="EC" id="3.6.5.3"/>
    </reaction>
    <physiologicalReaction direction="left-to-right" evidence="2">
        <dbReference type="Rhea" id="RHEA:19670"/>
    </physiologicalReaction>
</comment>
<comment type="subunit">
    <text evidence="2">Monomer.</text>
</comment>
<comment type="subcellular location">
    <subcellularLocation>
        <location evidence="2">Cytoplasm</location>
    </subcellularLocation>
</comment>
<comment type="similarity">
    <text evidence="2">Belongs to the TRAFAC class translation factor GTPase superfamily. Classic translation factor GTPase family. EF-Tu/EF-1A subfamily.</text>
</comment>
<proteinExistence type="inferred from homology"/>
<dbReference type="EC" id="3.6.5.3" evidence="2"/>
<dbReference type="EMBL" id="CP000301">
    <property type="protein sequence ID" value="ABD88990.1"/>
    <property type="molecule type" value="Genomic_DNA"/>
</dbReference>
<dbReference type="SMR" id="Q211E6"/>
<dbReference type="STRING" id="316056.RPC_3450"/>
<dbReference type="KEGG" id="rpc:RPC_3450"/>
<dbReference type="eggNOG" id="COG0050">
    <property type="taxonomic scope" value="Bacteria"/>
</dbReference>
<dbReference type="HOGENOM" id="CLU_007265_0_1_5"/>
<dbReference type="OrthoDB" id="9803139at2"/>
<dbReference type="GO" id="GO:0005829">
    <property type="term" value="C:cytosol"/>
    <property type="evidence" value="ECO:0007669"/>
    <property type="project" value="TreeGrafter"/>
</dbReference>
<dbReference type="GO" id="GO:0005525">
    <property type="term" value="F:GTP binding"/>
    <property type="evidence" value="ECO:0007669"/>
    <property type="project" value="UniProtKB-UniRule"/>
</dbReference>
<dbReference type="GO" id="GO:0003924">
    <property type="term" value="F:GTPase activity"/>
    <property type="evidence" value="ECO:0007669"/>
    <property type="project" value="InterPro"/>
</dbReference>
<dbReference type="GO" id="GO:0097216">
    <property type="term" value="F:guanosine tetraphosphate binding"/>
    <property type="evidence" value="ECO:0007669"/>
    <property type="project" value="UniProtKB-ARBA"/>
</dbReference>
<dbReference type="GO" id="GO:0003746">
    <property type="term" value="F:translation elongation factor activity"/>
    <property type="evidence" value="ECO:0007669"/>
    <property type="project" value="UniProtKB-UniRule"/>
</dbReference>
<dbReference type="CDD" id="cd01884">
    <property type="entry name" value="EF_Tu"/>
    <property type="match status" value="1"/>
</dbReference>
<dbReference type="CDD" id="cd03697">
    <property type="entry name" value="EFTU_II"/>
    <property type="match status" value="1"/>
</dbReference>
<dbReference type="CDD" id="cd03707">
    <property type="entry name" value="EFTU_III"/>
    <property type="match status" value="1"/>
</dbReference>
<dbReference type="FunFam" id="2.40.30.10:FF:000001">
    <property type="entry name" value="Elongation factor Tu"/>
    <property type="match status" value="1"/>
</dbReference>
<dbReference type="FunFam" id="3.40.50.300:FF:000003">
    <property type="entry name" value="Elongation factor Tu"/>
    <property type="match status" value="1"/>
</dbReference>
<dbReference type="Gene3D" id="3.40.50.300">
    <property type="entry name" value="P-loop containing nucleotide triphosphate hydrolases"/>
    <property type="match status" value="1"/>
</dbReference>
<dbReference type="Gene3D" id="2.40.30.10">
    <property type="entry name" value="Translation factors"/>
    <property type="match status" value="2"/>
</dbReference>
<dbReference type="HAMAP" id="MF_00118_B">
    <property type="entry name" value="EF_Tu_B"/>
    <property type="match status" value="1"/>
</dbReference>
<dbReference type="InterPro" id="IPR041709">
    <property type="entry name" value="EF-Tu_GTP-bd"/>
</dbReference>
<dbReference type="InterPro" id="IPR050055">
    <property type="entry name" value="EF-Tu_GTPase"/>
</dbReference>
<dbReference type="InterPro" id="IPR004161">
    <property type="entry name" value="EFTu-like_2"/>
</dbReference>
<dbReference type="InterPro" id="IPR033720">
    <property type="entry name" value="EFTU_2"/>
</dbReference>
<dbReference type="InterPro" id="IPR031157">
    <property type="entry name" value="G_TR_CS"/>
</dbReference>
<dbReference type="InterPro" id="IPR027417">
    <property type="entry name" value="P-loop_NTPase"/>
</dbReference>
<dbReference type="InterPro" id="IPR005225">
    <property type="entry name" value="Small_GTP-bd"/>
</dbReference>
<dbReference type="InterPro" id="IPR000795">
    <property type="entry name" value="T_Tr_GTP-bd_dom"/>
</dbReference>
<dbReference type="InterPro" id="IPR009000">
    <property type="entry name" value="Transl_B-barrel_sf"/>
</dbReference>
<dbReference type="InterPro" id="IPR009001">
    <property type="entry name" value="Transl_elong_EF1A/Init_IF2_C"/>
</dbReference>
<dbReference type="InterPro" id="IPR004541">
    <property type="entry name" value="Transl_elong_EFTu/EF1A_bac/org"/>
</dbReference>
<dbReference type="InterPro" id="IPR004160">
    <property type="entry name" value="Transl_elong_EFTu/EF1A_C"/>
</dbReference>
<dbReference type="NCBIfam" id="TIGR00485">
    <property type="entry name" value="EF-Tu"/>
    <property type="match status" value="1"/>
</dbReference>
<dbReference type="NCBIfam" id="NF000766">
    <property type="entry name" value="PRK00049.1"/>
    <property type="match status" value="1"/>
</dbReference>
<dbReference type="NCBIfam" id="NF009372">
    <property type="entry name" value="PRK12735.1"/>
    <property type="match status" value="1"/>
</dbReference>
<dbReference type="NCBIfam" id="NF009373">
    <property type="entry name" value="PRK12736.1"/>
    <property type="match status" value="1"/>
</dbReference>
<dbReference type="NCBIfam" id="TIGR00231">
    <property type="entry name" value="small_GTP"/>
    <property type="match status" value="1"/>
</dbReference>
<dbReference type="PANTHER" id="PTHR43721:SF22">
    <property type="entry name" value="ELONGATION FACTOR TU, MITOCHONDRIAL"/>
    <property type="match status" value="1"/>
</dbReference>
<dbReference type="PANTHER" id="PTHR43721">
    <property type="entry name" value="ELONGATION FACTOR TU-RELATED"/>
    <property type="match status" value="1"/>
</dbReference>
<dbReference type="Pfam" id="PF00009">
    <property type="entry name" value="GTP_EFTU"/>
    <property type="match status" value="1"/>
</dbReference>
<dbReference type="Pfam" id="PF03144">
    <property type="entry name" value="GTP_EFTU_D2"/>
    <property type="match status" value="1"/>
</dbReference>
<dbReference type="Pfam" id="PF03143">
    <property type="entry name" value="GTP_EFTU_D3"/>
    <property type="match status" value="1"/>
</dbReference>
<dbReference type="PRINTS" id="PR00315">
    <property type="entry name" value="ELONGATNFCT"/>
</dbReference>
<dbReference type="SUPFAM" id="SSF50465">
    <property type="entry name" value="EF-Tu/eEF-1alpha/eIF2-gamma C-terminal domain"/>
    <property type="match status" value="1"/>
</dbReference>
<dbReference type="SUPFAM" id="SSF52540">
    <property type="entry name" value="P-loop containing nucleoside triphosphate hydrolases"/>
    <property type="match status" value="1"/>
</dbReference>
<dbReference type="SUPFAM" id="SSF50447">
    <property type="entry name" value="Translation proteins"/>
    <property type="match status" value="1"/>
</dbReference>
<dbReference type="PROSITE" id="PS00301">
    <property type="entry name" value="G_TR_1"/>
    <property type="match status" value="1"/>
</dbReference>
<dbReference type="PROSITE" id="PS51722">
    <property type="entry name" value="G_TR_2"/>
    <property type="match status" value="1"/>
</dbReference>
<accession>Q211E6</accession>
<gene>
    <name evidence="2" type="primary">tuf</name>
    <name type="ordered locus">RPC_3450</name>
</gene>
<keyword id="KW-0963">Cytoplasm</keyword>
<keyword id="KW-0251">Elongation factor</keyword>
<keyword id="KW-0342">GTP-binding</keyword>
<keyword id="KW-0378">Hydrolase</keyword>
<keyword id="KW-0460">Magnesium</keyword>
<keyword id="KW-0479">Metal-binding</keyword>
<keyword id="KW-0547">Nucleotide-binding</keyword>
<keyword id="KW-0648">Protein biosynthesis</keyword>
<sequence length="396" mass="43313">MAKAKFERNKPHCNIGTIGHVDHGKTSLTAAITKVLAETGGATFTAYDQIDKAPEEKARGITISTAHVEYETANRHYAHVDCPGHADYVKNMITGAAQMDGAILVVSAADGPMPQTREHILLARQVGVPALVVFLNKCDMVDDPELLELVEMEVRELLSKYDFPGDDIPIVKGSALAALENKDPKLGHDAILELMKAVDAYIPQPERPIDQPFLMPVEDVFSISGRGTVVTGRVERGIVKVGEEIEIVGLRDTQKTIVTGVEMFRKLLDQGQAGDNIGALLRGTKREEVERGQVLCKPGSVKPHTKFKAEAYILTKEEGGRHTPFFTNYRPQFYFRTTDVTGVVHLPEGTEMVMPGDNIAMEVHLIVPIAMEEKLRFAIREGGRTVGAGVVASIIE</sequence>
<protein>
    <recommendedName>
        <fullName evidence="2">Elongation factor Tu</fullName>
        <shortName evidence="2">EF-Tu</shortName>
        <ecNumber evidence="2">3.6.5.3</ecNumber>
    </recommendedName>
</protein>
<name>EFTU_RHOPB</name>
<evidence type="ECO:0000250" key="1"/>
<evidence type="ECO:0000255" key="2">
    <source>
        <dbReference type="HAMAP-Rule" id="MF_00118"/>
    </source>
</evidence>